<dbReference type="EC" id="2.5.1.7" evidence="1"/>
<dbReference type="EMBL" id="AE005176">
    <property type="protein sequence ID" value="AAK04410.1"/>
    <property type="molecule type" value="Genomic_DNA"/>
</dbReference>
<dbReference type="PIR" id="H86663">
    <property type="entry name" value="H86663"/>
</dbReference>
<dbReference type="RefSeq" id="NP_266468.1">
    <property type="nucleotide sequence ID" value="NC_002662.1"/>
</dbReference>
<dbReference type="RefSeq" id="WP_003131684.1">
    <property type="nucleotide sequence ID" value="NC_002662.1"/>
</dbReference>
<dbReference type="SMR" id="Q9CIP4"/>
<dbReference type="PaxDb" id="272623-L113067"/>
<dbReference type="EnsemblBacteria" id="AAK04410">
    <property type="protein sequence ID" value="AAK04410"/>
    <property type="gene ID" value="L113067"/>
</dbReference>
<dbReference type="KEGG" id="lla:L113067"/>
<dbReference type="PATRIC" id="fig|272623.7.peg.342"/>
<dbReference type="eggNOG" id="COG0766">
    <property type="taxonomic scope" value="Bacteria"/>
</dbReference>
<dbReference type="HOGENOM" id="CLU_027387_0_0_9"/>
<dbReference type="OrthoDB" id="9803760at2"/>
<dbReference type="UniPathway" id="UPA00219"/>
<dbReference type="Proteomes" id="UP000002196">
    <property type="component" value="Chromosome"/>
</dbReference>
<dbReference type="GO" id="GO:0005737">
    <property type="term" value="C:cytoplasm"/>
    <property type="evidence" value="ECO:0007669"/>
    <property type="project" value="UniProtKB-SubCell"/>
</dbReference>
<dbReference type="GO" id="GO:0008760">
    <property type="term" value="F:UDP-N-acetylglucosamine 1-carboxyvinyltransferase activity"/>
    <property type="evidence" value="ECO:0007669"/>
    <property type="project" value="UniProtKB-UniRule"/>
</dbReference>
<dbReference type="GO" id="GO:0051301">
    <property type="term" value="P:cell division"/>
    <property type="evidence" value="ECO:0007669"/>
    <property type="project" value="UniProtKB-KW"/>
</dbReference>
<dbReference type="GO" id="GO:0071555">
    <property type="term" value="P:cell wall organization"/>
    <property type="evidence" value="ECO:0007669"/>
    <property type="project" value="UniProtKB-KW"/>
</dbReference>
<dbReference type="GO" id="GO:0009252">
    <property type="term" value="P:peptidoglycan biosynthetic process"/>
    <property type="evidence" value="ECO:0007669"/>
    <property type="project" value="UniProtKB-UniRule"/>
</dbReference>
<dbReference type="GO" id="GO:0008360">
    <property type="term" value="P:regulation of cell shape"/>
    <property type="evidence" value="ECO:0007669"/>
    <property type="project" value="UniProtKB-KW"/>
</dbReference>
<dbReference type="GO" id="GO:0019277">
    <property type="term" value="P:UDP-N-acetylgalactosamine biosynthetic process"/>
    <property type="evidence" value="ECO:0007669"/>
    <property type="project" value="InterPro"/>
</dbReference>
<dbReference type="CDD" id="cd01555">
    <property type="entry name" value="UdpNAET"/>
    <property type="match status" value="1"/>
</dbReference>
<dbReference type="Gene3D" id="3.65.10.10">
    <property type="entry name" value="Enolpyruvate transferase domain"/>
    <property type="match status" value="2"/>
</dbReference>
<dbReference type="HAMAP" id="MF_00111">
    <property type="entry name" value="MurA"/>
    <property type="match status" value="1"/>
</dbReference>
<dbReference type="InterPro" id="IPR001986">
    <property type="entry name" value="Enolpyruvate_Tfrase_dom"/>
</dbReference>
<dbReference type="InterPro" id="IPR036968">
    <property type="entry name" value="Enolpyruvate_Tfrase_sf"/>
</dbReference>
<dbReference type="InterPro" id="IPR050068">
    <property type="entry name" value="MurA_subfamily"/>
</dbReference>
<dbReference type="InterPro" id="IPR013792">
    <property type="entry name" value="RNA3'P_cycl/enolpyr_Trfase_a/b"/>
</dbReference>
<dbReference type="InterPro" id="IPR005750">
    <property type="entry name" value="UDP_GlcNAc_COvinyl_MurA"/>
</dbReference>
<dbReference type="NCBIfam" id="TIGR01072">
    <property type="entry name" value="murA"/>
    <property type="match status" value="1"/>
</dbReference>
<dbReference type="NCBIfam" id="NF006873">
    <property type="entry name" value="PRK09369.1"/>
    <property type="match status" value="1"/>
</dbReference>
<dbReference type="NCBIfam" id="NF009470">
    <property type="entry name" value="PRK12830.1"/>
    <property type="match status" value="1"/>
</dbReference>
<dbReference type="PANTHER" id="PTHR43783">
    <property type="entry name" value="UDP-N-ACETYLGLUCOSAMINE 1-CARBOXYVINYLTRANSFERASE"/>
    <property type="match status" value="1"/>
</dbReference>
<dbReference type="PANTHER" id="PTHR43783:SF2">
    <property type="entry name" value="UDP-N-ACETYLGLUCOSAMINE 1-CARBOXYVINYLTRANSFERASE 2"/>
    <property type="match status" value="1"/>
</dbReference>
<dbReference type="Pfam" id="PF00275">
    <property type="entry name" value="EPSP_synthase"/>
    <property type="match status" value="1"/>
</dbReference>
<dbReference type="SUPFAM" id="SSF55205">
    <property type="entry name" value="EPT/RTPC-like"/>
    <property type="match status" value="1"/>
</dbReference>
<sequence length="421" mass="44918">MKKIVINGGKRISGTIPISGAKNSVVALIPATILANDVVTLEGVPDISDVASLVEIMEIMGAKIERNLEEGRLVIDTRSVVSRPLPYGKINSLRASYYFNGALLGRFGQATVGLPGGCDLGPRPTDLHDKAFKALGAKKIQEEEAEHLEVIGDSLVGTTIYMDVVSVGATINTMLAASRAKGLTIIENAAREPEIIDVATLINNMGAQVRGAGTDIIRITGVDEMHGAQHTVIPDRIEAGTYLALAAAMGDGVIIENVIYEHLESFIAKLEEMGVGLTIREDSIEVHKSENLKSVNITSVPYPGFATDLQQPITPLLLKAKGRGSIVDTIYQKRVNHVPELARMGANISVLDDRIIYDAPNELTGSCVQATDLRAGAALVTAGIIASGTTKISNIEFILRGYDHIIEKLTAVGVDIQLIEE</sequence>
<organism>
    <name type="scientific">Lactococcus lactis subsp. lactis (strain IL1403)</name>
    <name type="common">Streptococcus lactis</name>
    <dbReference type="NCBI Taxonomy" id="272623"/>
    <lineage>
        <taxon>Bacteria</taxon>
        <taxon>Bacillati</taxon>
        <taxon>Bacillota</taxon>
        <taxon>Bacilli</taxon>
        <taxon>Lactobacillales</taxon>
        <taxon>Streptococcaceae</taxon>
        <taxon>Lactococcus</taxon>
    </lineage>
</organism>
<keyword id="KW-0131">Cell cycle</keyword>
<keyword id="KW-0132">Cell division</keyword>
<keyword id="KW-0133">Cell shape</keyword>
<keyword id="KW-0961">Cell wall biogenesis/degradation</keyword>
<keyword id="KW-0963">Cytoplasm</keyword>
<keyword id="KW-0573">Peptidoglycan synthesis</keyword>
<keyword id="KW-0670">Pyruvate</keyword>
<keyword id="KW-1185">Reference proteome</keyword>
<keyword id="KW-0808">Transferase</keyword>
<feature type="chain" id="PRO_0000178880" description="UDP-N-acetylglucosamine 1-carboxyvinyltransferase 2">
    <location>
        <begin position="1"/>
        <end position="421"/>
    </location>
</feature>
<feature type="active site" description="Proton donor" evidence="1">
    <location>
        <position position="118"/>
    </location>
</feature>
<feature type="binding site" evidence="1">
    <location>
        <begin position="22"/>
        <end position="23"/>
    </location>
    <ligand>
        <name>phosphoenolpyruvate</name>
        <dbReference type="ChEBI" id="CHEBI:58702"/>
    </ligand>
</feature>
<feature type="binding site" evidence="1">
    <location>
        <position position="94"/>
    </location>
    <ligand>
        <name>UDP-N-acetyl-alpha-D-glucosamine</name>
        <dbReference type="ChEBI" id="CHEBI:57705"/>
    </ligand>
</feature>
<feature type="binding site" evidence="1">
    <location>
        <position position="308"/>
    </location>
    <ligand>
        <name>UDP-N-acetyl-alpha-D-glucosamine</name>
        <dbReference type="ChEBI" id="CHEBI:57705"/>
    </ligand>
</feature>
<feature type="binding site" evidence="1">
    <location>
        <position position="330"/>
    </location>
    <ligand>
        <name>UDP-N-acetyl-alpha-D-glucosamine</name>
        <dbReference type="ChEBI" id="CHEBI:57705"/>
    </ligand>
</feature>
<feature type="modified residue" description="2-(S-cysteinyl)pyruvic acid O-phosphothioketal" evidence="1">
    <location>
        <position position="118"/>
    </location>
</feature>
<evidence type="ECO:0000255" key="1">
    <source>
        <dbReference type="HAMAP-Rule" id="MF_00111"/>
    </source>
</evidence>
<comment type="function">
    <text evidence="1">Cell wall formation. Adds enolpyruvyl to UDP-N-acetylglucosamine.</text>
</comment>
<comment type="catalytic activity">
    <reaction evidence="1">
        <text>phosphoenolpyruvate + UDP-N-acetyl-alpha-D-glucosamine = UDP-N-acetyl-3-O-(1-carboxyvinyl)-alpha-D-glucosamine + phosphate</text>
        <dbReference type="Rhea" id="RHEA:18681"/>
        <dbReference type="ChEBI" id="CHEBI:43474"/>
        <dbReference type="ChEBI" id="CHEBI:57705"/>
        <dbReference type="ChEBI" id="CHEBI:58702"/>
        <dbReference type="ChEBI" id="CHEBI:68483"/>
        <dbReference type="EC" id="2.5.1.7"/>
    </reaction>
</comment>
<comment type="pathway">
    <text evidence="1">Cell wall biogenesis; peptidoglycan biosynthesis.</text>
</comment>
<comment type="subcellular location">
    <subcellularLocation>
        <location evidence="1">Cytoplasm</location>
    </subcellularLocation>
</comment>
<comment type="similarity">
    <text evidence="1">Belongs to the EPSP synthase family. MurA subfamily.</text>
</comment>
<reference key="1">
    <citation type="journal article" date="2001" name="Genome Res.">
        <title>The complete genome sequence of the lactic acid bacterium Lactococcus lactis ssp. lactis IL1403.</title>
        <authorList>
            <person name="Bolotin A."/>
            <person name="Wincker P."/>
            <person name="Mauger S."/>
            <person name="Jaillon O."/>
            <person name="Malarme K."/>
            <person name="Weissenbach J."/>
            <person name="Ehrlich S.D."/>
            <person name="Sorokin A."/>
        </authorList>
    </citation>
    <scope>NUCLEOTIDE SEQUENCE [LARGE SCALE GENOMIC DNA]</scope>
    <source>
        <strain>IL1403</strain>
    </source>
</reference>
<gene>
    <name evidence="1" type="primary">murA2</name>
    <name type="synonym">murZ</name>
    <name type="ordered locus">LL0312</name>
    <name type="ORF">L113067</name>
</gene>
<proteinExistence type="inferred from homology"/>
<protein>
    <recommendedName>
        <fullName evidence="1">UDP-N-acetylglucosamine 1-carboxyvinyltransferase 2</fullName>
        <ecNumber evidence="1">2.5.1.7</ecNumber>
    </recommendedName>
    <alternativeName>
        <fullName evidence="1">Enoylpyruvate transferase 2</fullName>
    </alternativeName>
    <alternativeName>
        <fullName evidence="1">UDP-N-acetylglucosamine enolpyruvyl transferase 2</fullName>
        <shortName evidence="1">EPT 2</shortName>
    </alternativeName>
</protein>
<accession>Q9CIP4</accession>
<name>MURA2_LACLA</name>